<evidence type="ECO:0000305" key="1"/>
<proteinExistence type="inferred from homology"/>
<organism>
    <name type="scientific">Rat coronavirus (strain 681)</name>
    <name type="common">RCV-SDAV</name>
    <name type="synonym">Sialodacryoadenitis virus SDAV-681</name>
    <dbReference type="NCBI Taxonomy" id="33740"/>
    <lineage>
        <taxon>Viruses</taxon>
        <taxon>Riboviria</taxon>
        <taxon>Orthornavirae</taxon>
        <taxon>Pisuviricota</taxon>
        <taxon>Pisoniviricetes</taxon>
        <taxon>Nidovirales</taxon>
        <taxon>Cornidovirineae</taxon>
        <taxon>Coronaviridae</taxon>
        <taxon>Orthocoronavirinae</taxon>
        <taxon>Betacoronavirus</taxon>
        <taxon>Embecovirus</taxon>
        <taxon>Murine coronavirus</taxon>
    </lineage>
</organism>
<dbReference type="EMBL" id="AF207551">
    <property type="protein sequence ID" value="AAF97739.1"/>
    <property type="molecule type" value="Genomic_RNA"/>
</dbReference>
<dbReference type="SMR" id="Q9IKD0"/>
<dbReference type="InterPro" id="IPR005603">
    <property type="entry name" value="Corona_NS4"/>
</dbReference>
<dbReference type="Pfam" id="PF03905">
    <property type="entry name" value="Corona_NS4"/>
    <property type="match status" value="1"/>
</dbReference>
<reference key="1">
    <citation type="journal article" date="2000" name="Clin. Diagn. Lab. Immunol.">
        <title>Primary structure of the sialodacryoadenitis virus genome: sequence of the structural-protein region and its application for differential diagnosis.</title>
        <authorList>
            <person name="Yoo D."/>
            <person name="Pei Y."/>
            <person name="Christie N."/>
            <person name="Cooper M."/>
        </authorList>
    </citation>
    <scope>NUCLEOTIDE SEQUENCE [GENOMIC RNA]</scope>
</reference>
<feature type="chain" id="PRO_0000283966" description="Non-structural protein 4">
    <location>
        <begin position="1"/>
        <end position="139"/>
    </location>
</feature>
<sequence length="139" mass="15387">MAALGHKAKLAAVFIGPFIVACMLGISLVYLYQLQVQIFHVNNTIRVTGKPATVSYTLSTPVTPVATTLDGTTYTLIRPTSSYTRVYLGKTRGFDTSTFGPKVLNYITSSKPHLNSGRPYTFRHMPKYMTPSATWRFGM</sequence>
<accession>Q9IKD0</accession>
<organismHost>
    <name type="scientific">Rattus norvegicus</name>
    <name type="common">Rat</name>
    <dbReference type="NCBI Taxonomy" id="10116"/>
</organismHost>
<protein>
    <recommendedName>
        <fullName>Non-structural protein 4</fullName>
    </recommendedName>
    <alternativeName>
        <fullName>15 kDa non-structural protein</fullName>
    </alternativeName>
    <alternativeName>
        <fullName>Accessory protein 4</fullName>
    </alternativeName>
    <alternativeName>
        <fullName>ns4</fullName>
    </alternativeName>
</protein>
<comment type="similarity">
    <text evidence="1">Belongs to the coronaviruses ns4/ns4.8 protein family.</text>
</comment>
<name>NS4_CVRSD</name>